<accession>Q9RAU1</accession>
<accession>A2RMI3</accession>
<sequence>MGASLNEIKTKIASTKKTSQITGAMQMVSAAKLQKAESHAKAFQTYAEKVRKITTDLVSSDNEPAKNPMMIKREVKKTGYLVITSDRGLVGSYNSNILKSVISNIRKRHTNESEYTILALGGTGADFFKARNVKVSYVLRGLSDQPTFEEVRAIVTEAVEEYQAEEFDELYVCYNHHVNSLVSEARMEKMLPISFDEKGDEKASLVTFELEPDRETILNQLLPQYAESMIYGSIVDAKTAEHAAGMTAMRTATDNAHSVINDLTIQYNRARQASITQEITEIVAGASAL</sequence>
<comment type="function">
    <text evidence="1">Produces ATP from ADP in the presence of a proton gradient across the membrane. The gamma chain is believed to be important in regulating ATPase activity and the flow of protons through the CF(0) complex.</text>
</comment>
<comment type="subunit">
    <text evidence="1">F-type ATPases have 2 components, CF(1) - the catalytic core - and CF(0) - the membrane proton channel. CF(1) has five subunits: alpha(3), beta(3), gamma(1), delta(1), epsilon(1). CF(0) has three main subunits: a, b and c.</text>
</comment>
<comment type="subcellular location">
    <subcellularLocation>
        <location evidence="1">Cell membrane</location>
        <topology evidence="1">Peripheral membrane protein</topology>
    </subcellularLocation>
</comment>
<comment type="similarity">
    <text evidence="1">Belongs to the ATPase gamma chain family.</text>
</comment>
<gene>
    <name evidence="1" type="primary">atpG</name>
    <name type="ordered locus">llmg_1947</name>
</gene>
<keyword id="KW-0066">ATP synthesis</keyword>
<keyword id="KW-1003">Cell membrane</keyword>
<keyword id="KW-0139">CF(1)</keyword>
<keyword id="KW-0375">Hydrogen ion transport</keyword>
<keyword id="KW-0406">Ion transport</keyword>
<keyword id="KW-0472">Membrane</keyword>
<keyword id="KW-0813">Transport</keyword>
<feature type="chain" id="PRO_0000073301" description="ATP synthase gamma chain">
    <location>
        <begin position="1"/>
        <end position="289"/>
    </location>
</feature>
<proteinExistence type="inferred from homology"/>
<organism>
    <name type="scientific">Lactococcus lactis subsp. cremoris (strain MG1363)</name>
    <dbReference type="NCBI Taxonomy" id="416870"/>
    <lineage>
        <taxon>Bacteria</taxon>
        <taxon>Bacillati</taxon>
        <taxon>Bacillota</taxon>
        <taxon>Bacilli</taxon>
        <taxon>Lactobacillales</taxon>
        <taxon>Streptococcaceae</taxon>
        <taxon>Lactococcus</taxon>
        <taxon>Lactococcus cremoris subsp. cremoris</taxon>
    </lineage>
</organism>
<protein>
    <recommendedName>
        <fullName evidence="1">ATP synthase gamma chain</fullName>
    </recommendedName>
    <alternativeName>
        <fullName evidence="1">ATP synthase F1 sector gamma subunit</fullName>
    </alternativeName>
    <alternativeName>
        <fullName evidence="1">F-ATPase gamma subunit</fullName>
    </alternativeName>
</protein>
<evidence type="ECO:0000255" key="1">
    <source>
        <dbReference type="HAMAP-Rule" id="MF_00815"/>
    </source>
</evidence>
<reference key="1">
    <citation type="journal article" date="2000" name="J. Bacteriol.">
        <title>The membrane bound H+-ATPase complex is essential for growth of Lactococcus lactis.</title>
        <authorList>
            <person name="Koebmann B.J."/>
            <person name="Nilsson D."/>
            <person name="Kuipers O.P."/>
            <person name="Jensen P.R."/>
        </authorList>
    </citation>
    <scope>NUCLEOTIDE SEQUENCE [GENOMIC DNA]</scope>
</reference>
<reference key="2">
    <citation type="journal article" date="2007" name="J. Bacteriol.">
        <title>The complete genome sequence of the lactic acid bacterial paradigm Lactococcus lactis subsp. cremoris MG1363.</title>
        <authorList>
            <person name="Wegmann U."/>
            <person name="O'Connell-Motherway M."/>
            <person name="Zomer A."/>
            <person name="Buist G."/>
            <person name="Shearman C."/>
            <person name="Canchaya C."/>
            <person name="Ventura M."/>
            <person name="Goesmann A."/>
            <person name="Gasson M.J."/>
            <person name="Kuipers O.P."/>
            <person name="van Sinderen D."/>
            <person name="Kok J."/>
        </authorList>
    </citation>
    <scope>NUCLEOTIDE SEQUENCE [LARGE SCALE GENOMIC DNA]</scope>
    <source>
        <strain>MG1363</strain>
    </source>
</reference>
<dbReference type="EMBL" id="AF059739">
    <property type="protein sequence ID" value="AAF02207.1"/>
    <property type="molecule type" value="Genomic_DNA"/>
</dbReference>
<dbReference type="EMBL" id="AM406671">
    <property type="protein sequence ID" value="CAL98515.1"/>
    <property type="molecule type" value="Genomic_DNA"/>
</dbReference>
<dbReference type="RefSeq" id="WP_011835690.1">
    <property type="nucleotide sequence ID" value="NC_009004.1"/>
</dbReference>
<dbReference type="SMR" id="Q9RAU1"/>
<dbReference type="STRING" id="416870.llmg_1947"/>
<dbReference type="KEGG" id="llm:llmg_1947"/>
<dbReference type="eggNOG" id="COG0224">
    <property type="taxonomic scope" value="Bacteria"/>
</dbReference>
<dbReference type="HOGENOM" id="CLU_050669_0_1_9"/>
<dbReference type="OrthoDB" id="9812769at2"/>
<dbReference type="PhylomeDB" id="Q9RAU1"/>
<dbReference type="Proteomes" id="UP000000364">
    <property type="component" value="Chromosome"/>
</dbReference>
<dbReference type="GO" id="GO:0005886">
    <property type="term" value="C:plasma membrane"/>
    <property type="evidence" value="ECO:0007669"/>
    <property type="project" value="UniProtKB-SubCell"/>
</dbReference>
<dbReference type="GO" id="GO:0045259">
    <property type="term" value="C:proton-transporting ATP synthase complex"/>
    <property type="evidence" value="ECO:0007669"/>
    <property type="project" value="UniProtKB-KW"/>
</dbReference>
<dbReference type="GO" id="GO:0005524">
    <property type="term" value="F:ATP binding"/>
    <property type="evidence" value="ECO:0007669"/>
    <property type="project" value="UniProtKB-UniRule"/>
</dbReference>
<dbReference type="GO" id="GO:0046933">
    <property type="term" value="F:proton-transporting ATP synthase activity, rotational mechanism"/>
    <property type="evidence" value="ECO:0007669"/>
    <property type="project" value="UniProtKB-UniRule"/>
</dbReference>
<dbReference type="GO" id="GO:0042777">
    <property type="term" value="P:proton motive force-driven plasma membrane ATP synthesis"/>
    <property type="evidence" value="ECO:0007669"/>
    <property type="project" value="UniProtKB-UniRule"/>
</dbReference>
<dbReference type="CDD" id="cd12151">
    <property type="entry name" value="F1-ATPase_gamma"/>
    <property type="match status" value="1"/>
</dbReference>
<dbReference type="FunFam" id="3.40.1380.10:FF:000002">
    <property type="entry name" value="ATP synthase gamma chain"/>
    <property type="match status" value="1"/>
</dbReference>
<dbReference type="Gene3D" id="3.40.1380.10">
    <property type="match status" value="1"/>
</dbReference>
<dbReference type="Gene3D" id="1.10.287.80">
    <property type="entry name" value="ATP synthase, gamma subunit, helix hairpin domain"/>
    <property type="match status" value="1"/>
</dbReference>
<dbReference type="HAMAP" id="MF_00815">
    <property type="entry name" value="ATP_synth_gamma_bact"/>
    <property type="match status" value="1"/>
</dbReference>
<dbReference type="InterPro" id="IPR035968">
    <property type="entry name" value="ATP_synth_F1_ATPase_gsu"/>
</dbReference>
<dbReference type="InterPro" id="IPR000131">
    <property type="entry name" value="ATP_synth_F1_gsu"/>
</dbReference>
<dbReference type="InterPro" id="IPR023632">
    <property type="entry name" value="ATP_synth_F1_gsu_CS"/>
</dbReference>
<dbReference type="NCBIfam" id="TIGR01146">
    <property type="entry name" value="ATPsyn_F1gamma"/>
    <property type="match status" value="1"/>
</dbReference>
<dbReference type="NCBIfam" id="NF004147">
    <property type="entry name" value="PRK05621.2-1"/>
    <property type="match status" value="1"/>
</dbReference>
<dbReference type="PANTHER" id="PTHR11693">
    <property type="entry name" value="ATP SYNTHASE GAMMA CHAIN"/>
    <property type="match status" value="1"/>
</dbReference>
<dbReference type="PANTHER" id="PTHR11693:SF22">
    <property type="entry name" value="ATP SYNTHASE SUBUNIT GAMMA, MITOCHONDRIAL"/>
    <property type="match status" value="1"/>
</dbReference>
<dbReference type="Pfam" id="PF00231">
    <property type="entry name" value="ATP-synt"/>
    <property type="match status" value="1"/>
</dbReference>
<dbReference type="PRINTS" id="PR00126">
    <property type="entry name" value="ATPASEGAMMA"/>
</dbReference>
<dbReference type="SUPFAM" id="SSF52943">
    <property type="entry name" value="ATP synthase (F1-ATPase), gamma subunit"/>
    <property type="match status" value="1"/>
</dbReference>
<dbReference type="PROSITE" id="PS00153">
    <property type="entry name" value="ATPASE_GAMMA"/>
    <property type="match status" value="1"/>
</dbReference>
<name>ATPG_LACLM</name>